<name>YKTA_BACSU</name>
<accession>Q45497</accession>
<sequence length="88" mass="10477">MEYQYPMNEDWTTEEAVDVIAFFQQVELAYEKGADREELLKAYRRFKEIVPGKAEEKKLCGEFEEQSTYSPYRTVKQARESDHAKIKM</sequence>
<gene>
    <name type="primary">yktA</name>
    <name type="ordered locus">BSU14640</name>
</gene>
<reference key="1">
    <citation type="journal article" date="1996" name="Microbiology">
        <title>The ampS-nprE (124 degrees-127 degrees) region of the Bacillus subtilis 168 chromosome: sequencing of a 27 kb segment and identification of several genes in the area.</title>
        <authorList>
            <person name="Winters P."/>
            <person name="Caldwell R.M."/>
            <person name="Enfield L."/>
            <person name="Ferrari E."/>
        </authorList>
    </citation>
    <scope>NUCLEOTIDE SEQUENCE [GENOMIC DNA]</scope>
    <source>
        <strain>168</strain>
    </source>
</reference>
<reference key="2">
    <citation type="submission" date="1997-07" db="EMBL/GenBank/DDBJ databases">
        <title>Sequence analysis of the mobA-ampS region of the Bacillus subtilis chromosome.</title>
        <authorList>
            <person name="Caldwell R.M."/>
            <person name="Ferrari E."/>
        </authorList>
    </citation>
    <scope>NUCLEOTIDE SEQUENCE [GENOMIC DNA]</scope>
    <source>
        <strain>168</strain>
    </source>
</reference>
<reference key="3">
    <citation type="journal article" date="1997" name="Nature">
        <title>The complete genome sequence of the Gram-positive bacterium Bacillus subtilis.</title>
        <authorList>
            <person name="Kunst F."/>
            <person name="Ogasawara N."/>
            <person name="Moszer I."/>
            <person name="Albertini A.M."/>
            <person name="Alloni G."/>
            <person name="Azevedo V."/>
            <person name="Bertero M.G."/>
            <person name="Bessieres P."/>
            <person name="Bolotin A."/>
            <person name="Borchert S."/>
            <person name="Borriss R."/>
            <person name="Boursier L."/>
            <person name="Brans A."/>
            <person name="Braun M."/>
            <person name="Brignell S.C."/>
            <person name="Bron S."/>
            <person name="Brouillet S."/>
            <person name="Bruschi C.V."/>
            <person name="Caldwell B."/>
            <person name="Capuano V."/>
            <person name="Carter N.M."/>
            <person name="Choi S.-K."/>
            <person name="Codani J.-J."/>
            <person name="Connerton I.F."/>
            <person name="Cummings N.J."/>
            <person name="Daniel R.A."/>
            <person name="Denizot F."/>
            <person name="Devine K.M."/>
            <person name="Duesterhoeft A."/>
            <person name="Ehrlich S.D."/>
            <person name="Emmerson P.T."/>
            <person name="Entian K.-D."/>
            <person name="Errington J."/>
            <person name="Fabret C."/>
            <person name="Ferrari E."/>
            <person name="Foulger D."/>
            <person name="Fritz C."/>
            <person name="Fujita M."/>
            <person name="Fujita Y."/>
            <person name="Fuma S."/>
            <person name="Galizzi A."/>
            <person name="Galleron N."/>
            <person name="Ghim S.-Y."/>
            <person name="Glaser P."/>
            <person name="Goffeau A."/>
            <person name="Golightly E.J."/>
            <person name="Grandi G."/>
            <person name="Guiseppi G."/>
            <person name="Guy B.J."/>
            <person name="Haga K."/>
            <person name="Haiech J."/>
            <person name="Harwood C.R."/>
            <person name="Henaut A."/>
            <person name="Hilbert H."/>
            <person name="Holsappel S."/>
            <person name="Hosono S."/>
            <person name="Hullo M.-F."/>
            <person name="Itaya M."/>
            <person name="Jones L.-M."/>
            <person name="Joris B."/>
            <person name="Karamata D."/>
            <person name="Kasahara Y."/>
            <person name="Klaerr-Blanchard M."/>
            <person name="Klein C."/>
            <person name="Kobayashi Y."/>
            <person name="Koetter P."/>
            <person name="Koningstein G."/>
            <person name="Krogh S."/>
            <person name="Kumano M."/>
            <person name="Kurita K."/>
            <person name="Lapidus A."/>
            <person name="Lardinois S."/>
            <person name="Lauber J."/>
            <person name="Lazarevic V."/>
            <person name="Lee S.-M."/>
            <person name="Levine A."/>
            <person name="Liu H."/>
            <person name="Masuda S."/>
            <person name="Mauel C."/>
            <person name="Medigue C."/>
            <person name="Medina N."/>
            <person name="Mellado R.P."/>
            <person name="Mizuno M."/>
            <person name="Moestl D."/>
            <person name="Nakai S."/>
            <person name="Noback M."/>
            <person name="Noone D."/>
            <person name="O'Reilly M."/>
            <person name="Ogawa K."/>
            <person name="Ogiwara A."/>
            <person name="Oudega B."/>
            <person name="Park S.-H."/>
            <person name="Parro V."/>
            <person name="Pohl T.M."/>
            <person name="Portetelle D."/>
            <person name="Porwollik S."/>
            <person name="Prescott A.M."/>
            <person name="Presecan E."/>
            <person name="Pujic P."/>
            <person name="Purnelle B."/>
            <person name="Rapoport G."/>
            <person name="Rey M."/>
            <person name="Reynolds S."/>
            <person name="Rieger M."/>
            <person name="Rivolta C."/>
            <person name="Rocha E."/>
            <person name="Roche B."/>
            <person name="Rose M."/>
            <person name="Sadaie Y."/>
            <person name="Sato T."/>
            <person name="Scanlan E."/>
            <person name="Schleich S."/>
            <person name="Schroeter R."/>
            <person name="Scoffone F."/>
            <person name="Sekiguchi J."/>
            <person name="Sekowska A."/>
            <person name="Seror S.J."/>
            <person name="Serror P."/>
            <person name="Shin B.-S."/>
            <person name="Soldo B."/>
            <person name="Sorokin A."/>
            <person name="Tacconi E."/>
            <person name="Takagi T."/>
            <person name="Takahashi H."/>
            <person name="Takemaru K."/>
            <person name="Takeuchi M."/>
            <person name="Tamakoshi A."/>
            <person name="Tanaka T."/>
            <person name="Terpstra P."/>
            <person name="Tognoni A."/>
            <person name="Tosato V."/>
            <person name="Uchiyama S."/>
            <person name="Vandenbol M."/>
            <person name="Vannier F."/>
            <person name="Vassarotti A."/>
            <person name="Viari A."/>
            <person name="Wambutt R."/>
            <person name="Wedler E."/>
            <person name="Wedler H."/>
            <person name="Weitzenegger T."/>
            <person name="Winters P."/>
            <person name="Wipat A."/>
            <person name="Yamamoto H."/>
            <person name="Yamane K."/>
            <person name="Yasumoto K."/>
            <person name="Yata K."/>
            <person name="Yoshida K."/>
            <person name="Yoshikawa H.-F."/>
            <person name="Zumstein E."/>
            <person name="Yoshikawa H."/>
            <person name="Danchin A."/>
        </authorList>
    </citation>
    <scope>NUCLEOTIDE SEQUENCE [LARGE SCALE GENOMIC DNA]</scope>
    <source>
        <strain>168</strain>
    </source>
</reference>
<dbReference type="EMBL" id="AF012285">
    <property type="protein sequence ID" value="AAC24938.1"/>
    <property type="molecule type" value="Genomic_DNA"/>
</dbReference>
<dbReference type="EMBL" id="AL009126">
    <property type="protein sequence ID" value="CAB13337.1"/>
    <property type="molecule type" value="Genomic_DNA"/>
</dbReference>
<dbReference type="PIR" id="C69864">
    <property type="entry name" value="C69864"/>
</dbReference>
<dbReference type="RefSeq" id="NP_389347.1">
    <property type="nucleotide sequence ID" value="NC_000964.3"/>
</dbReference>
<dbReference type="RefSeq" id="WP_003245382.1">
    <property type="nucleotide sequence ID" value="NZ_OZ025638.1"/>
</dbReference>
<dbReference type="SMR" id="Q45497"/>
<dbReference type="FunCoup" id="Q45497">
    <property type="interactions" value="53"/>
</dbReference>
<dbReference type="STRING" id="224308.BSU14640"/>
<dbReference type="PaxDb" id="224308-BSU14640"/>
<dbReference type="EnsemblBacteria" id="CAB13337">
    <property type="protein sequence ID" value="CAB13337"/>
    <property type="gene ID" value="BSU_14640"/>
</dbReference>
<dbReference type="GeneID" id="935989"/>
<dbReference type="KEGG" id="bsu:BSU14640"/>
<dbReference type="PATRIC" id="fig|224308.179.peg.1597"/>
<dbReference type="eggNOG" id="COG4476">
    <property type="taxonomic scope" value="Bacteria"/>
</dbReference>
<dbReference type="InParanoid" id="Q45497"/>
<dbReference type="OrthoDB" id="1649074at2"/>
<dbReference type="PhylomeDB" id="Q45497"/>
<dbReference type="BioCyc" id="BSUB:BSU14640-MONOMER"/>
<dbReference type="Proteomes" id="UP000001570">
    <property type="component" value="Chromosome"/>
</dbReference>
<dbReference type="Gene3D" id="1.10.220.80">
    <property type="entry name" value="BH2638-like"/>
    <property type="match status" value="1"/>
</dbReference>
<dbReference type="HAMAP" id="MF_01041">
    <property type="entry name" value="UPF0223"/>
    <property type="match status" value="1"/>
</dbReference>
<dbReference type="InterPro" id="IPR023324">
    <property type="entry name" value="BH2638-like_sf"/>
</dbReference>
<dbReference type="InterPro" id="IPR007920">
    <property type="entry name" value="UPF0223"/>
</dbReference>
<dbReference type="NCBIfam" id="NF003353">
    <property type="entry name" value="PRK04387.1"/>
    <property type="match status" value="1"/>
</dbReference>
<dbReference type="Pfam" id="PF05256">
    <property type="entry name" value="UPF0223"/>
    <property type="match status" value="1"/>
</dbReference>
<dbReference type="PIRSF" id="PIRSF037260">
    <property type="entry name" value="UPF0223"/>
    <property type="match status" value="1"/>
</dbReference>
<dbReference type="SUPFAM" id="SSF158504">
    <property type="entry name" value="BH2638-like"/>
    <property type="match status" value="1"/>
</dbReference>
<evidence type="ECO:0000305" key="1"/>
<keyword id="KW-1185">Reference proteome</keyword>
<protein>
    <recommendedName>
        <fullName>UPF0223 protein YktA</fullName>
    </recommendedName>
</protein>
<feature type="chain" id="PRO_0000216675" description="UPF0223 protein YktA">
    <location>
        <begin position="1"/>
        <end position="88"/>
    </location>
</feature>
<organism>
    <name type="scientific">Bacillus subtilis (strain 168)</name>
    <dbReference type="NCBI Taxonomy" id="224308"/>
    <lineage>
        <taxon>Bacteria</taxon>
        <taxon>Bacillati</taxon>
        <taxon>Bacillota</taxon>
        <taxon>Bacilli</taxon>
        <taxon>Bacillales</taxon>
        <taxon>Bacillaceae</taxon>
        <taxon>Bacillus</taxon>
    </lineage>
</organism>
<proteinExistence type="inferred from homology"/>
<comment type="similarity">
    <text evidence="1">Belongs to the UPF0223 family.</text>
</comment>